<protein>
    <recommendedName>
        <fullName evidence="8">Golgi-associated kinase 1A</fullName>
    </recommendedName>
    <alternativeName>
        <fullName>Protein FAM198A</fullName>
    </alternativeName>
</protein>
<evidence type="ECO:0000250" key="1">
    <source>
        <dbReference type="UniProtKB" id="Q3UY90"/>
    </source>
</evidence>
<evidence type="ECO:0000255" key="2"/>
<evidence type="ECO:0000256" key="3">
    <source>
        <dbReference type="SAM" id="MobiDB-lite"/>
    </source>
</evidence>
<evidence type="ECO:0000269" key="4">
    <source>
    </source>
</evidence>
<evidence type="ECO:0000269" key="5">
    <source>
    </source>
</evidence>
<evidence type="ECO:0000269" key="6">
    <source>
    </source>
</evidence>
<evidence type="ECO:0000269" key="7">
    <source>
    </source>
</evidence>
<evidence type="ECO:0000305" key="8"/>
<evidence type="ECO:0000312" key="9">
    <source>
        <dbReference type="HGNC" id="HGNC:24485"/>
    </source>
</evidence>
<proteinExistence type="evidence at protein level"/>
<gene>
    <name evidence="9" type="primary">GASK1A</name>
    <name type="synonym">C3orf41</name>
    <name evidence="9" type="synonym">FAM198A</name>
</gene>
<name>GAK1A_HUMAN</name>
<dbReference type="EMBL" id="AK091001">
    <property type="protein sequence ID" value="BAG52260.1"/>
    <property type="molecule type" value="mRNA"/>
</dbReference>
<dbReference type="EMBL" id="AC092042">
    <property type="status" value="NOT_ANNOTATED_CDS"/>
    <property type="molecule type" value="Genomic_DNA"/>
</dbReference>
<dbReference type="EMBL" id="AL117530">
    <property type="protein sequence ID" value="CAB55980.1"/>
    <property type="molecule type" value="mRNA"/>
</dbReference>
<dbReference type="CCDS" id="CCDS46808.1"/>
<dbReference type="PIR" id="T17290">
    <property type="entry name" value="T17290"/>
</dbReference>
<dbReference type="RefSeq" id="NP_001123380.2">
    <property type="nucleotide sequence ID" value="NM_001129908.3"/>
</dbReference>
<dbReference type="BioGRID" id="609491">
    <property type="interactions" value="7"/>
</dbReference>
<dbReference type="FunCoup" id="Q9UFP1">
    <property type="interactions" value="379"/>
</dbReference>
<dbReference type="IntAct" id="Q9UFP1">
    <property type="interactions" value="7"/>
</dbReference>
<dbReference type="STRING" id="9606.ENSP00000407301"/>
<dbReference type="GlyCosmos" id="Q9UFP1">
    <property type="glycosylation" value="4 sites, 1 glycan"/>
</dbReference>
<dbReference type="GlyGen" id="Q9UFP1">
    <property type="glycosylation" value="10 sites, 1 N-linked glycan (1 site), 2 O-linked glycans (9 sites)"/>
</dbReference>
<dbReference type="iPTMnet" id="Q9UFP1"/>
<dbReference type="PhosphoSitePlus" id="Q9UFP1"/>
<dbReference type="BioMuta" id="FAM198A"/>
<dbReference type="DMDM" id="296439353"/>
<dbReference type="MassIVE" id="Q9UFP1"/>
<dbReference type="PaxDb" id="9606-ENSP00000407301"/>
<dbReference type="PeptideAtlas" id="Q9UFP1"/>
<dbReference type="ProteomicsDB" id="84192"/>
<dbReference type="Antibodypedia" id="48543">
    <property type="antibodies" value="6 antibodies from 5 providers"/>
</dbReference>
<dbReference type="DNASU" id="729085"/>
<dbReference type="Ensembl" id="ENST00000273146.6">
    <property type="protein sequence ID" value="ENSP00000273146.2"/>
    <property type="gene ID" value="ENSG00000144649.10"/>
</dbReference>
<dbReference type="Ensembl" id="ENST00000430121.3">
    <property type="protein sequence ID" value="ENSP00000407301.2"/>
    <property type="gene ID" value="ENSG00000144649.10"/>
</dbReference>
<dbReference type="GeneID" id="729085"/>
<dbReference type="KEGG" id="hsa:729085"/>
<dbReference type="MANE-Select" id="ENST00000430121.3">
    <property type="protein sequence ID" value="ENSP00000407301.2"/>
    <property type="RefSeq nucleotide sequence ID" value="NM_001129908.3"/>
    <property type="RefSeq protein sequence ID" value="NP_001123380.2"/>
</dbReference>
<dbReference type="UCSC" id="uc003cmo.4">
    <property type="organism name" value="human"/>
</dbReference>
<dbReference type="AGR" id="HGNC:24485"/>
<dbReference type="CTD" id="729085"/>
<dbReference type="DisGeNET" id="729085"/>
<dbReference type="GeneCards" id="GASK1A"/>
<dbReference type="HGNC" id="HGNC:24485">
    <property type="gene designation" value="GASK1A"/>
</dbReference>
<dbReference type="HPA" id="ENSG00000144649">
    <property type="expression patterns" value="Low tissue specificity"/>
</dbReference>
<dbReference type="MIM" id="620413">
    <property type="type" value="gene"/>
</dbReference>
<dbReference type="neXtProt" id="NX_Q9UFP1"/>
<dbReference type="OpenTargets" id="ENSG00000144649"/>
<dbReference type="PharmGKB" id="PA165697369"/>
<dbReference type="VEuPathDB" id="HostDB:ENSG00000144649"/>
<dbReference type="eggNOG" id="ENOG502RYY5">
    <property type="taxonomic scope" value="Eukaryota"/>
</dbReference>
<dbReference type="GeneTree" id="ENSGT00420000029769"/>
<dbReference type="HOGENOM" id="CLU_033542_1_0_1"/>
<dbReference type="InParanoid" id="Q9UFP1"/>
<dbReference type="OMA" id="WFTEHDV"/>
<dbReference type="OrthoDB" id="10011371at2759"/>
<dbReference type="PAN-GO" id="Q9UFP1">
    <property type="GO annotations" value="1 GO annotation based on evolutionary models"/>
</dbReference>
<dbReference type="PhylomeDB" id="Q9UFP1"/>
<dbReference type="TreeFam" id="TF330994"/>
<dbReference type="PathwayCommons" id="Q9UFP1"/>
<dbReference type="SignaLink" id="Q9UFP1"/>
<dbReference type="BioGRID-ORCS" id="729085">
    <property type="hits" value="4 hits in 1135 CRISPR screens"/>
</dbReference>
<dbReference type="GenomeRNAi" id="729085"/>
<dbReference type="Pharos" id="Q9UFP1">
    <property type="development level" value="Tdark"/>
</dbReference>
<dbReference type="PRO" id="PR:Q9UFP1"/>
<dbReference type="Proteomes" id="UP000005640">
    <property type="component" value="Chromosome 3"/>
</dbReference>
<dbReference type="RNAct" id="Q9UFP1">
    <property type="molecule type" value="protein"/>
</dbReference>
<dbReference type="Bgee" id="ENSG00000144649">
    <property type="expression patterns" value="Expressed in tibia and 105 other cell types or tissues"/>
</dbReference>
<dbReference type="ExpressionAtlas" id="Q9UFP1">
    <property type="expression patterns" value="baseline and differential"/>
</dbReference>
<dbReference type="GO" id="GO:0005901">
    <property type="term" value="C:caveola"/>
    <property type="evidence" value="ECO:0007669"/>
    <property type="project" value="UniProtKB-SubCell"/>
</dbReference>
<dbReference type="GO" id="GO:0005783">
    <property type="term" value="C:endoplasmic reticulum"/>
    <property type="evidence" value="ECO:0000250"/>
    <property type="project" value="UniProtKB"/>
</dbReference>
<dbReference type="GO" id="GO:0005576">
    <property type="term" value="C:extracellular region"/>
    <property type="evidence" value="ECO:0000250"/>
    <property type="project" value="UniProtKB"/>
</dbReference>
<dbReference type="GO" id="GO:0005794">
    <property type="term" value="C:Golgi apparatus"/>
    <property type="evidence" value="ECO:0000250"/>
    <property type="project" value="UniProtKB"/>
</dbReference>
<dbReference type="GO" id="GO:0043231">
    <property type="term" value="C:intracellular membrane-bounded organelle"/>
    <property type="evidence" value="ECO:0000314"/>
    <property type="project" value="HPA"/>
</dbReference>
<dbReference type="InterPro" id="IPR029207">
    <property type="entry name" value="FAM198"/>
</dbReference>
<dbReference type="PANTHER" id="PTHR15905:SF5">
    <property type="entry name" value="GOLGI-ASSOCIATED KINASE 1A"/>
    <property type="match status" value="1"/>
</dbReference>
<dbReference type="PANTHER" id="PTHR15905">
    <property type="entry name" value="GOLGI-ASSOCIATED KINASE 1B-RELATED"/>
    <property type="match status" value="1"/>
</dbReference>
<dbReference type="Pfam" id="PF15051">
    <property type="entry name" value="FAM198"/>
    <property type="match status" value="1"/>
</dbReference>
<comment type="subcellular location">
    <subcellularLocation>
        <location evidence="8">Secreted</location>
    </subcellularLocation>
    <subcellularLocation>
        <location evidence="1">Endoplasmic reticulum</location>
    </subcellularLocation>
    <subcellularLocation>
        <location evidence="1">Golgi apparatus</location>
    </subcellularLocation>
    <subcellularLocation>
        <location evidence="7">Membrane</location>
        <location evidence="7">Caveola</location>
    </subcellularLocation>
    <text evidence="1">Requires caveolae biogenesis to be secreted from the endoplasmic reticulum going through the Golgi apparatus where is post-translationally processed to the mature form.</text>
</comment>
<comment type="tissue specificity">
    <text evidence="7">Expressed in skin, lung and colon (at protein level).</text>
</comment>
<comment type="PTM">
    <text evidence="6">O-glycosylated with core 1 or possibly core 8 glycans.</text>
</comment>
<comment type="PTM">
    <text evidence="7">Proteolytically cleaved. Cleaved at Arg-120 and Arg-437 leading to a processed mature product of 35 kDa. The cleavage takes place in the Golgi apparatus.</text>
</comment>
<comment type="similarity">
    <text evidence="8">Belongs to the GASK family.</text>
</comment>
<accession>Q9UFP1</accession>
<accession>B3KR48</accession>
<reference key="1">
    <citation type="journal article" date="2004" name="Nat. Genet.">
        <title>Complete sequencing and characterization of 21,243 full-length human cDNAs.</title>
        <authorList>
            <person name="Ota T."/>
            <person name="Suzuki Y."/>
            <person name="Nishikawa T."/>
            <person name="Otsuki T."/>
            <person name="Sugiyama T."/>
            <person name="Irie R."/>
            <person name="Wakamatsu A."/>
            <person name="Hayashi K."/>
            <person name="Sato H."/>
            <person name="Nagai K."/>
            <person name="Kimura K."/>
            <person name="Makita H."/>
            <person name="Sekine M."/>
            <person name="Obayashi M."/>
            <person name="Nishi T."/>
            <person name="Shibahara T."/>
            <person name="Tanaka T."/>
            <person name="Ishii S."/>
            <person name="Yamamoto J."/>
            <person name="Saito K."/>
            <person name="Kawai Y."/>
            <person name="Isono Y."/>
            <person name="Nakamura Y."/>
            <person name="Nagahari K."/>
            <person name="Murakami K."/>
            <person name="Yasuda T."/>
            <person name="Iwayanagi T."/>
            <person name="Wagatsuma M."/>
            <person name="Shiratori A."/>
            <person name="Sudo H."/>
            <person name="Hosoiri T."/>
            <person name="Kaku Y."/>
            <person name="Kodaira H."/>
            <person name="Kondo H."/>
            <person name="Sugawara M."/>
            <person name="Takahashi M."/>
            <person name="Kanda K."/>
            <person name="Yokoi T."/>
            <person name="Furuya T."/>
            <person name="Kikkawa E."/>
            <person name="Omura Y."/>
            <person name="Abe K."/>
            <person name="Kamihara K."/>
            <person name="Katsuta N."/>
            <person name="Sato K."/>
            <person name="Tanikawa M."/>
            <person name="Yamazaki M."/>
            <person name="Ninomiya K."/>
            <person name="Ishibashi T."/>
            <person name="Yamashita H."/>
            <person name="Murakawa K."/>
            <person name="Fujimori K."/>
            <person name="Tanai H."/>
            <person name="Kimata M."/>
            <person name="Watanabe M."/>
            <person name="Hiraoka S."/>
            <person name="Chiba Y."/>
            <person name="Ishida S."/>
            <person name="Ono Y."/>
            <person name="Takiguchi S."/>
            <person name="Watanabe S."/>
            <person name="Yosida M."/>
            <person name="Hotuta T."/>
            <person name="Kusano J."/>
            <person name="Kanehori K."/>
            <person name="Takahashi-Fujii A."/>
            <person name="Hara H."/>
            <person name="Tanase T.-O."/>
            <person name="Nomura Y."/>
            <person name="Togiya S."/>
            <person name="Komai F."/>
            <person name="Hara R."/>
            <person name="Takeuchi K."/>
            <person name="Arita M."/>
            <person name="Imose N."/>
            <person name="Musashino K."/>
            <person name="Yuuki H."/>
            <person name="Oshima A."/>
            <person name="Sasaki N."/>
            <person name="Aotsuka S."/>
            <person name="Yoshikawa Y."/>
            <person name="Matsunawa H."/>
            <person name="Ichihara T."/>
            <person name="Shiohata N."/>
            <person name="Sano S."/>
            <person name="Moriya S."/>
            <person name="Momiyama H."/>
            <person name="Satoh N."/>
            <person name="Takami S."/>
            <person name="Terashima Y."/>
            <person name="Suzuki O."/>
            <person name="Nakagawa S."/>
            <person name="Senoh A."/>
            <person name="Mizoguchi H."/>
            <person name="Goto Y."/>
            <person name="Shimizu F."/>
            <person name="Wakebe H."/>
            <person name="Hishigaki H."/>
            <person name="Watanabe T."/>
            <person name="Sugiyama A."/>
            <person name="Takemoto M."/>
            <person name="Kawakami B."/>
            <person name="Yamazaki M."/>
            <person name="Watanabe K."/>
            <person name="Kumagai A."/>
            <person name="Itakura S."/>
            <person name="Fukuzumi Y."/>
            <person name="Fujimori Y."/>
            <person name="Komiyama M."/>
            <person name="Tashiro H."/>
            <person name="Tanigami A."/>
            <person name="Fujiwara T."/>
            <person name="Ono T."/>
            <person name="Yamada K."/>
            <person name="Fujii Y."/>
            <person name="Ozaki K."/>
            <person name="Hirao M."/>
            <person name="Ohmori Y."/>
            <person name="Kawabata A."/>
            <person name="Hikiji T."/>
            <person name="Kobatake N."/>
            <person name="Inagaki H."/>
            <person name="Ikema Y."/>
            <person name="Okamoto S."/>
            <person name="Okitani R."/>
            <person name="Kawakami T."/>
            <person name="Noguchi S."/>
            <person name="Itoh T."/>
            <person name="Shigeta K."/>
            <person name="Senba T."/>
            <person name="Matsumura K."/>
            <person name="Nakajima Y."/>
            <person name="Mizuno T."/>
            <person name="Morinaga M."/>
            <person name="Sasaki M."/>
            <person name="Togashi T."/>
            <person name="Oyama M."/>
            <person name="Hata H."/>
            <person name="Watanabe M."/>
            <person name="Komatsu T."/>
            <person name="Mizushima-Sugano J."/>
            <person name="Satoh T."/>
            <person name="Shirai Y."/>
            <person name="Takahashi Y."/>
            <person name="Nakagawa K."/>
            <person name="Okumura K."/>
            <person name="Nagase T."/>
            <person name="Nomura N."/>
            <person name="Kikuchi H."/>
            <person name="Masuho Y."/>
            <person name="Yamashita R."/>
            <person name="Nakai K."/>
            <person name="Yada T."/>
            <person name="Nakamura Y."/>
            <person name="Ohara O."/>
            <person name="Isogai T."/>
            <person name="Sugano S."/>
        </authorList>
    </citation>
    <scope>NUCLEOTIDE SEQUENCE [LARGE SCALE MRNA]</scope>
    <scope>VARIANTS TYR-227 AND ARG-460</scope>
    <source>
        <tissue>Brain</tissue>
    </source>
</reference>
<reference key="2">
    <citation type="journal article" date="2006" name="Nature">
        <title>The DNA sequence, annotation and analysis of human chromosome 3.</title>
        <authorList>
            <person name="Muzny D.M."/>
            <person name="Scherer S.E."/>
            <person name="Kaul R."/>
            <person name="Wang J."/>
            <person name="Yu J."/>
            <person name="Sudbrak R."/>
            <person name="Buhay C.J."/>
            <person name="Chen R."/>
            <person name="Cree A."/>
            <person name="Ding Y."/>
            <person name="Dugan-Rocha S."/>
            <person name="Gill R."/>
            <person name="Gunaratne P."/>
            <person name="Harris R.A."/>
            <person name="Hawes A.C."/>
            <person name="Hernandez J."/>
            <person name="Hodgson A.V."/>
            <person name="Hume J."/>
            <person name="Jackson A."/>
            <person name="Khan Z.M."/>
            <person name="Kovar-Smith C."/>
            <person name="Lewis L.R."/>
            <person name="Lozado R.J."/>
            <person name="Metzker M.L."/>
            <person name="Milosavljevic A."/>
            <person name="Miner G.R."/>
            <person name="Morgan M.B."/>
            <person name="Nazareth L.V."/>
            <person name="Scott G."/>
            <person name="Sodergren E."/>
            <person name="Song X.-Z."/>
            <person name="Steffen D."/>
            <person name="Wei S."/>
            <person name="Wheeler D.A."/>
            <person name="Wright M.W."/>
            <person name="Worley K.C."/>
            <person name="Yuan Y."/>
            <person name="Zhang Z."/>
            <person name="Adams C.Q."/>
            <person name="Ansari-Lari M.A."/>
            <person name="Ayele M."/>
            <person name="Brown M.J."/>
            <person name="Chen G."/>
            <person name="Chen Z."/>
            <person name="Clendenning J."/>
            <person name="Clerc-Blankenburg K.P."/>
            <person name="Chen R."/>
            <person name="Chen Z."/>
            <person name="Davis C."/>
            <person name="Delgado O."/>
            <person name="Dinh H.H."/>
            <person name="Dong W."/>
            <person name="Draper H."/>
            <person name="Ernst S."/>
            <person name="Fu G."/>
            <person name="Gonzalez-Garay M.L."/>
            <person name="Garcia D.K."/>
            <person name="Gillett W."/>
            <person name="Gu J."/>
            <person name="Hao B."/>
            <person name="Haugen E."/>
            <person name="Havlak P."/>
            <person name="He X."/>
            <person name="Hennig S."/>
            <person name="Hu S."/>
            <person name="Huang W."/>
            <person name="Jackson L.R."/>
            <person name="Jacob L.S."/>
            <person name="Kelly S.H."/>
            <person name="Kube M."/>
            <person name="Levy R."/>
            <person name="Li Z."/>
            <person name="Liu B."/>
            <person name="Liu J."/>
            <person name="Liu W."/>
            <person name="Lu J."/>
            <person name="Maheshwari M."/>
            <person name="Nguyen B.-V."/>
            <person name="Okwuonu G.O."/>
            <person name="Palmeiri A."/>
            <person name="Pasternak S."/>
            <person name="Perez L.M."/>
            <person name="Phelps K.A."/>
            <person name="Plopper F.J."/>
            <person name="Qiang B."/>
            <person name="Raymond C."/>
            <person name="Rodriguez R."/>
            <person name="Saenphimmachak C."/>
            <person name="Santibanez J."/>
            <person name="Shen H."/>
            <person name="Shen Y."/>
            <person name="Subramanian S."/>
            <person name="Tabor P.E."/>
            <person name="Verduzco D."/>
            <person name="Waldron L."/>
            <person name="Wang J."/>
            <person name="Wang J."/>
            <person name="Wang Q."/>
            <person name="Williams G.A."/>
            <person name="Wong G.K.-S."/>
            <person name="Yao Z."/>
            <person name="Zhang J."/>
            <person name="Zhang X."/>
            <person name="Zhao G."/>
            <person name="Zhou J."/>
            <person name="Zhou Y."/>
            <person name="Nelson D."/>
            <person name="Lehrach H."/>
            <person name="Reinhardt R."/>
            <person name="Naylor S.L."/>
            <person name="Yang H."/>
            <person name="Olson M."/>
            <person name="Weinstock G."/>
            <person name="Gibbs R.A."/>
        </authorList>
    </citation>
    <scope>NUCLEOTIDE SEQUENCE [LARGE SCALE GENOMIC DNA]</scope>
</reference>
<reference key="3">
    <citation type="journal article" date="2007" name="BMC Genomics">
        <title>The full-ORF clone resource of the German cDNA consortium.</title>
        <authorList>
            <person name="Bechtel S."/>
            <person name="Rosenfelder H."/>
            <person name="Duda A."/>
            <person name="Schmidt C.P."/>
            <person name="Ernst U."/>
            <person name="Wellenreuther R."/>
            <person name="Mehrle A."/>
            <person name="Schuster C."/>
            <person name="Bahr A."/>
            <person name="Bloecker H."/>
            <person name="Heubner D."/>
            <person name="Hoerlein A."/>
            <person name="Michel G."/>
            <person name="Wedler H."/>
            <person name="Koehrer K."/>
            <person name="Ottenwaelder B."/>
            <person name="Poustka A."/>
            <person name="Wiemann S."/>
            <person name="Schupp I."/>
        </authorList>
    </citation>
    <scope>NUCLEOTIDE SEQUENCE [LARGE SCALE MRNA] OF 128-575</scope>
    <scope>VARIANT TYR-227</scope>
    <source>
        <tissue>Testis</tissue>
    </source>
</reference>
<reference key="4">
    <citation type="journal article" date="2012" name="Mol. Cell. Proteomics">
        <title>Human urinary glycoproteomics; attachment site specific analysis of N- and O-linked glycosylations by CID and ECD.</title>
        <authorList>
            <person name="Halim A."/>
            <person name="Nilsson J."/>
            <person name="Ruetschi U."/>
            <person name="Hesse C."/>
            <person name="Larson G."/>
        </authorList>
    </citation>
    <scope>GLYCOSYLATION</scope>
    <scope>STRUCTURE OF CARBOHYDRATES</scope>
    <scope>IDENTIFICATION BY MASS SPECTROMETRY</scope>
</reference>
<reference key="5">
    <citation type="journal article" date="2018" name="Acta Biochim. Biophys. Sin.">
        <title>Fam198a, a member of secreted kinase, secrets through caveolae biogenesis pathway.</title>
        <authorList>
            <person name="Wei Z."/>
            <person name="Liu T."/>
            <person name="Lei J."/>
            <person name="Wu Y."/>
            <person name="Wang S."/>
            <person name="Liao K."/>
        </authorList>
    </citation>
    <scope>TISSUE SPECIFICITY</scope>
    <scope>SUBCELLULAR LOCATION</scope>
    <scope>MUTAGENESIS OF 119-ARG-ARG-120 AND ARG-437</scope>
    <scope>PROTEOLYTIC CLEAVAGE</scope>
</reference>
<organism>
    <name type="scientific">Homo sapiens</name>
    <name type="common">Human</name>
    <dbReference type="NCBI Taxonomy" id="9606"/>
    <lineage>
        <taxon>Eukaryota</taxon>
        <taxon>Metazoa</taxon>
        <taxon>Chordata</taxon>
        <taxon>Craniata</taxon>
        <taxon>Vertebrata</taxon>
        <taxon>Euteleostomi</taxon>
        <taxon>Mammalia</taxon>
        <taxon>Eutheria</taxon>
        <taxon>Euarchontoglires</taxon>
        <taxon>Primates</taxon>
        <taxon>Haplorrhini</taxon>
        <taxon>Catarrhini</taxon>
        <taxon>Hominidae</taxon>
        <taxon>Homo</taxon>
    </lineage>
</organism>
<feature type="signal peptide" evidence="2">
    <location>
        <begin position="1"/>
        <end position="29"/>
    </location>
</feature>
<feature type="chain" id="PRO_0000301948" description="Golgi-associated kinase 1A">
    <location>
        <begin position="30"/>
        <end position="575"/>
    </location>
</feature>
<feature type="propeptide" id="PRO_0000446051" description="Removed in mature form" evidence="7">
    <location>
        <begin position="30"/>
        <end position="119"/>
    </location>
</feature>
<feature type="propeptide" id="PRO_0000446052" description="Removed in mature form" evidence="7">
    <location>
        <begin position="437"/>
        <end position="575"/>
    </location>
</feature>
<feature type="region of interest" description="O-glycosylated at one site">
    <location>
        <begin position="53"/>
        <end position="58"/>
    </location>
</feature>
<feature type="region of interest" description="Disordered" evidence="3">
    <location>
        <begin position="143"/>
        <end position="162"/>
    </location>
</feature>
<feature type="compositionally biased region" description="Basic and acidic residues" evidence="3">
    <location>
        <begin position="143"/>
        <end position="153"/>
    </location>
</feature>
<feature type="site" description="Cleavage" evidence="7">
    <location>
        <begin position="119"/>
        <end position="120"/>
    </location>
</feature>
<feature type="site" description="Cleavage" evidence="7">
    <location>
        <begin position="436"/>
        <end position="437"/>
    </location>
</feature>
<feature type="glycosylation site" description="N-linked (GlcNAc...) asparagine" evidence="2">
    <location>
        <position position="566"/>
    </location>
</feature>
<feature type="sequence variant" id="VAR_063129" description="In dbSNP:rs2936817." evidence="4 5">
    <original>H</original>
    <variation>Y</variation>
    <location>
        <position position="227"/>
    </location>
</feature>
<feature type="sequence variant" id="VAR_063130" description="In dbSNP:rs536119." evidence="4">
    <original>Q</original>
    <variation>R</variation>
    <location>
        <position position="460"/>
    </location>
</feature>
<feature type="mutagenesis site" description="Abolishes proteolytic cleavage; when associated with A-437." evidence="7">
    <original>RR</original>
    <variation>AA</variation>
    <location>
        <begin position="119"/>
        <end position="120"/>
    </location>
</feature>
<feature type="mutagenesis site" description="Abolishes proteolytic cleavage; when associated with 119-A-A-120." evidence="7">
    <original>R</original>
    <variation>A</variation>
    <location>
        <position position="437"/>
    </location>
</feature>
<feature type="sequence conflict" description="In Ref. 1; BAG52260." evidence="8" ref="1">
    <original>E</original>
    <variation>G</variation>
    <location>
        <position position="234"/>
    </location>
</feature>
<feature type="sequence conflict" description="In Ref. 3; CAB55980." evidence="8" ref="3">
    <original>G</original>
    <variation>S</variation>
    <location>
        <position position="539"/>
    </location>
</feature>
<keyword id="KW-0256">Endoplasmic reticulum</keyword>
<keyword id="KW-0325">Glycoprotein</keyword>
<keyword id="KW-0333">Golgi apparatus</keyword>
<keyword id="KW-0472">Membrane</keyword>
<keyword id="KW-1267">Proteomics identification</keyword>
<keyword id="KW-1185">Reference proteome</keyword>
<keyword id="KW-0964">Secreted</keyword>
<keyword id="KW-0732">Signal</keyword>
<sequence>MASWLRRKLRGKRRPVIAFCLLMILSAMAVTRFPPQRPSAGPDPGPMEPQGVTGAPATHIRQALSSSRRQRARNMGFWRSRALPRNSILVCAEEQGHRARVDRSRESPGGDLRHPGRVRRDITLSGHPRLSTQHVVLLREDEVGDPGTKDLGHPQHGSPIQETQSEVVTLVSPLPGSDMAALPAWRATSGLTLWPHTAEGRDLLGAENRALTGGQQAEDPTLASGAHQWPGSVEKLQGSVWCDAETLLSSSRTGGQAPPWLTDHDVQMLRLLAQGEVVDKARVPAHGQVLQVGFSTEAALQDLSSPRLSQLCSQGLCGLIKRPGDLPEVLSFHVDRVLGLRRSLPAVARRFHSPLLPYRYTDGGARPVIWWAPDVQHLSDPDEDQNSLALGWLQYQALLAHSCNWPGQAPCPGIHHTEWARLALFDFLLQVHDRLDRYCCGFEPEPSDPCVEERLREKCQNPAELRLVHILVRSSDPSHLVYIDNAGNLQHPEDKLNFRLLEGIDGFPESAVKVLASGCLQNMLLKSLQMDPVFWESQGGAQGLKQVLQTLEQRGQVLLGHIQKHNLTLFRDEDP</sequence>